<protein>
    <recommendedName>
        <fullName evidence="1">Transcription factor E</fullName>
        <shortName evidence="1">TFE</shortName>
    </recommendedName>
    <alternativeName>
        <fullName evidence="1">TFIIE subunit alpha homolog</fullName>
    </alternativeName>
    <alternativeName>
        <fullName evidence="1">Transcription initiation factor TFIIE</fullName>
    </alternativeName>
</protein>
<accession>Q2NEV4</accession>
<proteinExistence type="inferred from homology"/>
<keyword id="KW-0238">DNA-binding</keyword>
<keyword id="KW-1185">Reference proteome</keyword>
<keyword id="KW-0804">Transcription</keyword>
<keyword id="KW-0805">Transcription regulation</keyword>
<feature type="chain" id="PRO_0000326611" description="Transcription factor E">
    <location>
        <begin position="1"/>
        <end position="179"/>
    </location>
</feature>
<feature type="domain" description="HTH TFE/IIEalpha-type" evidence="1">
    <location>
        <begin position="1"/>
        <end position="102"/>
    </location>
</feature>
<evidence type="ECO:0000255" key="1">
    <source>
        <dbReference type="HAMAP-Rule" id="MF_01909"/>
    </source>
</evidence>
<reference key="1">
    <citation type="journal article" date="2006" name="J. Bacteriol.">
        <title>The genome sequence of Methanosphaera stadtmanae reveals why this human intestinal archaeon is restricted to methanol and H2 for methane formation and ATP synthesis.</title>
        <authorList>
            <person name="Fricke W.F."/>
            <person name="Seedorf H."/>
            <person name="Henne A."/>
            <person name="Kruer M."/>
            <person name="Liesegang H."/>
            <person name="Hedderich R."/>
            <person name="Gottschalk G."/>
            <person name="Thauer R.K."/>
        </authorList>
    </citation>
    <scope>NUCLEOTIDE SEQUENCE [LARGE SCALE GENOMIC DNA]</scope>
    <source>
        <strain>ATCC 43021 / DSM 3091 / JCM 11832 / MCB-3</strain>
    </source>
</reference>
<comment type="function">
    <text evidence="1">Transcription factor that plays a role in the activation of archaeal genes transcribed by RNA polymerase. Facilitates transcription initiation by enhancing TATA-box recognition by TATA-box-binding protein (Tbp), and transcription factor B (Tfb) and RNA polymerase recruitment. Not absolutely required for transcription in vitro, but particularly important in cases where Tbp or Tfb function is not optimal. It dynamically alters the nucleic acid-binding properties of RNA polymerases by stabilizing the initiation complex and destabilizing elongation complexes. Seems to translocate with the RNA polymerase following initiation and acts by binding to the non template strand of the transcription bubble in elongation complexes.</text>
</comment>
<comment type="subunit">
    <text evidence="1">Monomer. Interaction with RNA polymerase subunits RpoF and RpoE is necessary for Tfe stimulatory transcription activity. Able to interact with Tbp and RNA polymerase in the absence of DNA promoter. Interacts both with the preinitiation and elongation complexes.</text>
</comment>
<comment type="domain">
    <text evidence="1">The winged helix domain is involved in binding to DNA in the preinitiation complex.</text>
</comment>
<comment type="similarity">
    <text evidence="1">Belongs to the TFE family.</text>
</comment>
<organism>
    <name type="scientific">Methanosphaera stadtmanae (strain ATCC 43021 / DSM 3091 / JCM 11832 / MCB-3)</name>
    <dbReference type="NCBI Taxonomy" id="339860"/>
    <lineage>
        <taxon>Archaea</taxon>
        <taxon>Methanobacteriati</taxon>
        <taxon>Methanobacteriota</taxon>
        <taxon>Methanomada group</taxon>
        <taxon>Methanobacteria</taxon>
        <taxon>Methanobacteriales</taxon>
        <taxon>Methanobacteriaceae</taxon>
        <taxon>Methanosphaera</taxon>
    </lineage>
</organism>
<name>TFE_METST</name>
<dbReference type="EMBL" id="CP000102">
    <property type="protein sequence ID" value="ABC57649.1"/>
    <property type="molecule type" value="Genomic_DNA"/>
</dbReference>
<dbReference type="RefSeq" id="WP_011406848.1">
    <property type="nucleotide sequence ID" value="NC_007681.1"/>
</dbReference>
<dbReference type="SMR" id="Q2NEV4"/>
<dbReference type="STRING" id="339860.Msp_1272"/>
<dbReference type="GeneID" id="41325842"/>
<dbReference type="KEGG" id="mst:Msp_1272"/>
<dbReference type="eggNOG" id="arCOG04270">
    <property type="taxonomic scope" value="Archaea"/>
</dbReference>
<dbReference type="HOGENOM" id="CLU_100097_0_0_2"/>
<dbReference type="OrthoDB" id="5935at2157"/>
<dbReference type="Proteomes" id="UP000001931">
    <property type="component" value="Chromosome"/>
</dbReference>
<dbReference type="GO" id="GO:0003677">
    <property type="term" value="F:DNA binding"/>
    <property type="evidence" value="ECO:0007669"/>
    <property type="project" value="UniProtKB-KW"/>
</dbReference>
<dbReference type="GO" id="GO:0006355">
    <property type="term" value="P:regulation of DNA-templated transcription"/>
    <property type="evidence" value="ECO:0007669"/>
    <property type="project" value="InterPro"/>
</dbReference>
<dbReference type="GO" id="GO:0006367">
    <property type="term" value="P:transcription initiation at RNA polymerase II promoter"/>
    <property type="evidence" value="ECO:0007669"/>
    <property type="project" value="InterPro"/>
</dbReference>
<dbReference type="Gene3D" id="1.10.10.10">
    <property type="entry name" value="Winged helix-like DNA-binding domain superfamily/Winged helix DNA-binding domain"/>
    <property type="match status" value="1"/>
</dbReference>
<dbReference type="HAMAP" id="MF_01909">
    <property type="entry name" value="TFE_arch"/>
    <property type="match status" value="1"/>
</dbReference>
<dbReference type="InterPro" id="IPR016481">
    <property type="entry name" value="TF_E_archaea"/>
</dbReference>
<dbReference type="InterPro" id="IPR039997">
    <property type="entry name" value="TFE"/>
</dbReference>
<dbReference type="InterPro" id="IPR017919">
    <property type="entry name" value="TFIIE/TFIIEa_HTH"/>
</dbReference>
<dbReference type="InterPro" id="IPR002853">
    <property type="entry name" value="TFIIE_asu"/>
</dbReference>
<dbReference type="InterPro" id="IPR024550">
    <property type="entry name" value="TFIIEa/SarR/Rpc3_HTH_dom"/>
</dbReference>
<dbReference type="InterPro" id="IPR036388">
    <property type="entry name" value="WH-like_DNA-bd_sf"/>
</dbReference>
<dbReference type="InterPro" id="IPR036390">
    <property type="entry name" value="WH_DNA-bd_sf"/>
</dbReference>
<dbReference type="NCBIfam" id="NF004910">
    <property type="entry name" value="PRK06266.1"/>
    <property type="match status" value="1"/>
</dbReference>
<dbReference type="NCBIfam" id="TIGR00373">
    <property type="entry name" value="transcription factor E"/>
    <property type="match status" value="1"/>
</dbReference>
<dbReference type="PANTHER" id="PTHR13097:SF7">
    <property type="entry name" value="GENERAL TRANSCRIPTION FACTOR IIE SUBUNIT 1"/>
    <property type="match status" value="1"/>
</dbReference>
<dbReference type="PANTHER" id="PTHR13097">
    <property type="entry name" value="TRANSCRIPTION INITIATION FACTOR IIE, ALPHA SUBUNIT"/>
    <property type="match status" value="1"/>
</dbReference>
<dbReference type="Pfam" id="PF02002">
    <property type="entry name" value="TFIIE_alpha"/>
    <property type="match status" value="1"/>
</dbReference>
<dbReference type="PIRSF" id="PIRSF006373">
    <property type="entry name" value="TF_E_archaea"/>
    <property type="match status" value="1"/>
</dbReference>
<dbReference type="SMART" id="SM00531">
    <property type="entry name" value="TFIIE"/>
    <property type="match status" value="1"/>
</dbReference>
<dbReference type="SUPFAM" id="SSF46785">
    <property type="entry name" value="Winged helix' DNA-binding domain"/>
    <property type="match status" value="1"/>
</dbReference>
<dbReference type="PROSITE" id="PS51344">
    <property type="entry name" value="HTH_TFE_IIE"/>
    <property type="match status" value="1"/>
</dbReference>
<sequence>MAKKKVKYTFDYDSKFLNEHNVKKLAYELTHDSDTSNKILDCLFTAEVTDEQIAEATGIKLNFVRKILYKFYDVGMANYTRKKDPETQWFTYYWRFDSRKAAQILEKQYNHHNQEIKESIEYEENNMFFVCPNGCRYPFDEATEFQFICPRCNEKLEFKDNSDLIHDLKKLESAYKINE</sequence>
<gene>
    <name evidence="1" type="primary">tfe</name>
    <name type="ordered locus">Msp_1272</name>
</gene>